<reference key="1">
    <citation type="journal article" date="2002" name="Nature">
        <title>The genome sequence of Schizosaccharomyces pombe.</title>
        <authorList>
            <person name="Wood V."/>
            <person name="Gwilliam R."/>
            <person name="Rajandream M.A."/>
            <person name="Lyne M.H."/>
            <person name="Lyne R."/>
            <person name="Stewart A."/>
            <person name="Sgouros J.G."/>
            <person name="Peat N."/>
            <person name="Hayles J."/>
            <person name="Baker S.G."/>
            <person name="Basham D."/>
            <person name="Bowman S."/>
            <person name="Brooks K."/>
            <person name="Brown D."/>
            <person name="Brown S."/>
            <person name="Chillingworth T."/>
            <person name="Churcher C.M."/>
            <person name="Collins M."/>
            <person name="Connor R."/>
            <person name="Cronin A."/>
            <person name="Davis P."/>
            <person name="Feltwell T."/>
            <person name="Fraser A."/>
            <person name="Gentles S."/>
            <person name="Goble A."/>
            <person name="Hamlin N."/>
            <person name="Harris D.E."/>
            <person name="Hidalgo J."/>
            <person name="Hodgson G."/>
            <person name="Holroyd S."/>
            <person name="Hornsby T."/>
            <person name="Howarth S."/>
            <person name="Huckle E.J."/>
            <person name="Hunt S."/>
            <person name="Jagels K."/>
            <person name="James K.D."/>
            <person name="Jones L."/>
            <person name="Jones M."/>
            <person name="Leather S."/>
            <person name="McDonald S."/>
            <person name="McLean J."/>
            <person name="Mooney P."/>
            <person name="Moule S."/>
            <person name="Mungall K.L."/>
            <person name="Murphy L.D."/>
            <person name="Niblett D."/>
            <person name="Odell C."/>
            <person name="Oliver K."/>
            <person name="O'Neil S."/>
            <person name="Pearson D."/>
            <person name="Quail M.A."/>
            <person name="Rabbinowitsch E."/>
            <person name="Rutherford K.M."/>
            <person name="Rutter S."/>
            <person name="Saunders D."/>
            <person name="Seeger K."/>
            <person name="Sharp S."/>
            <person name="Skelton J."/>
            <person name="Simmonds M.N."/>
            <person name="Squares R."/>
            <person name="Squares S."/>
            <person name="Stevens K."/>
            <person name="Taylor K."/>
            <person name="Taylor R.G."/>
            <person name="Tivey A."/>
            <person name="Walsh S.V."/>
            <person name="Warren T."/>
            <person name="Whitehead S."/>
            <person name="Woodward J.R."/>
            <person name="Volckaert G."/>
            <person name="Aert R."/>
            <person name="Robben J."/>
            <person name="Grymonprez B."/>
            <person name="Weltjens I."/>
            <person name="Vanstreels E."/>
            <person name="Rieger M."/>
            <person name="Schaefer M."/>
            <person name="Mueller-Auer S."/>
            <person name="Gabel C."/>
            <person name="Fuchs M."/>
            <person name="Duesterhoeft A."/>
            <person name="Fritzc C."/>
            <person name="Holzer E."/>
            <person name="Moestl D."/>
            <person name="Hilbert H."/>
            <person name="Borzym K."/>
            <person name="Langer I."/>
            <person name="Beck A."/>
            <person name="Lehrach H."/>
            <person name="Reinhardt R."/>
            <person name="Pohl T.M."/>
            <person name="Eger P."/>
            <person name="Zimmermann W."/>
            <person name="Wedler H."/>
            <person name="Wambutt R."/>
            <person name="Purnelle B."/>
            <person name="Goffeau A."/>
            <person name="Cadieu E."/>
            <person name="Dreano S."/>
            <person name="Gloux S."/>
            <person name="Lelaure V."/>
            <person name="Mottier S."/>
            <person name="Galibert F."/>
            <person name="Aves S.J."/>
            <person name="Xiang Z."/>
            <person name="Hunt C."/>
            <person name="Moore K."/>
            <person name="Hurst S.M."/>
            <person name="Lucas M."/>
            <person name="Rochet M."/>
            <person name="Gaillardin C."/>
            <person name="Tallada V.A."/>
            <person name="Garzon A."/>
            <person name="Thode G."/>
            <person name="Daga R.R."/>
            <person name="Cruzado L."/>
            <person name="Jimenez J."/>
            <person name="Sanchez M."/>
            <person name="del Rey F."/>
            <person name="Benito J."/>
            <person name="Dominguez A."/>
            <person name="Revuelta J.L."/>
            <person name="Moreno S."/>
            <person name="Armstrong J."/>
            <person name="Forsburg S.L."/>
            <person name="Cerutti L."/>
            <person name="Lowe T."/>
            <person name="McCombie W.R."/>
            <person name="Paulsen I."/>
            <person name="Potashkin J."/>
            <person name="Shpakovski G.V."/>
            <person name="Ussery D."/>
            <person name="Barrell B.G."/>
            <person name="Nurse P."/>
        </authorList>
    </citation>
    <scope>NUCLEOTIDE SEQUENCE [LARGE SCALE GENOMIC DNA]</scope>
    <source>
        <strain>972 / ATCC 24843</strain>
    </source>
</reference>
<reference key="2">
    <citation type="journal article" date="2011" name="Science">
        <title>Comparative functional genomics of the fission yeasts.</title>
        <authorList>
            <person name="Rhind N."/>
            <person name="Chen Z."/>
            <person name="Yassour M."/>
            <person name="Thompson D.A."/>
            <person name="Haas B.J."/>
            <person name="Habib N."/>
            <person name="Wapinski I."/>
            <person name="Roy S."/>
            <person name="Lin M.F."/>
            <person name="Heiman D.I."/>
            <person name="Young S.K."/>
            <person name="Furuya K."/>
            <person name="Guo Y."/>
            <person name="Pidoux A."/>
            <person name="Chen H.M."/>
            <person name="Robbertse B."/>
            <person name="Goldberg J.M."/>
            <person name="Aoki K."/>
            <person name="Bayne E.H."/>
            <person name="Berlin A.M."/>
            <person name="Desjardins C.A."/>
            <person name="Dobbs E."/>
            <person name="Dukaj L."/>
            <person name="Fan L."/>
            <person name="FitzGerald M.G."/>
            <person name="French C."/>
            <person name="Gujja S."/>
            <person name="Hansen K."/>
            <person name="Keifenheim D."/>
            <person name="Levin J.Z."/>
            <person name="Mosher R.A."/>
            <person name="Mueller C.A."/>
            <person name="Pfiffner J."/>
            <person name="Priest M."/>
            <person name="Russ C."/>
            <person name="Smialowska A."/>
            <person name="Swoboda P."/>
            <person name="Sykes S.M."/>
            <person name="Vaughn M."/>
            <person name="Vengrova S."/>
            <person name="Yoder R."/>
            <person name="Zeng Q."/>
            <person name="Allshire R."/>
            <person name="Baulcombe D."/>
            <person name="Birren B.W."/>
            <person name="Brown W."/>
            <person name="Ekwall K."/>
            <person name="Kellis M."/>
            <person name="Leatherwood J."/>
            <person name="Levin H."/>
            <person name="Margalit H."/>
            <person name="Martienssen R."/>
            <person name="Nieduszynski C.A."/>
            <person name="Spatafora J.W."/>
            <person name="Friedman N."/>
            <person name="Dalgaard J.Z."/>
            <person name="Baumann P."/>
            <person name="Niki H."/>
            <person name="Regev A."/>
            <person name="Nusbaum C."/>
        </authorList>
    </citation>
    <scope>REVISION OF GENE MODEL</scope>
</reference>
<reference key="3">
    <citation type="journal article" date="2005" name="Curr. Biol.">
        <title>A large-scale screen in S. pombe identifies seven novel genes required for critical meiotic events.</title>
        <authorList>
            <person name="Martin-Castellanos C."/>
            <person name="Blanco M."/>
            <person name="Rozalen A.E."/>
            <person name="Perez-Hidalgo L."/>
            <person name="Garcia A.I."/>
            <person name="Conde F."/>
            <person name="Mata J."/>
            <person name="Ellermeier C."/>
            <person name="Davis L."/>
            <person name="San-Segundo P."/>
            <person name="Smith G.R."/>
            <person name="Moreno S."/>
        </authorList>
    </citation>
    <scope>FUNCTION IN MEIOSIS</scope>
</reference>
<reference key="4">
    <citation type="journal article" date="2006" name="Nat. Biotechnol.">
        <title>ORFeome cloning and global analysis of protein localization in the fission yeast Schizosaccharomyces pombe.</title>
        <authorList>
            <person name="Matsuyama A."/>
            <person name="Arai R."/>
            <person name="Yashiroda Y."/>
            <person name="Shirai A."/>
            <person name="Kamata A."/>
            <person name="Sekido S."/>
            <person name="Kobayashi Y."/>
            <person name="Hashimoto A."/>
            <person name="Hamamoto M."/>
            <person name="Hiraoka Y."/>
            <person name="Horinouchi S."/>
            <person name="Yoshida M."/>
        </authorList>
    </citation>
    <scope>SUBCELLULAR LOCATION [LARGE SCALE ANALYSIS]</scope>
</reference>
<feature type="chain" id="PRO_0000080990" description="Meiotically up-regulated gene 10 protein">
    <location>
        <begin position="1"/>
        <end position="344"/>
    </location>
</feature>
<feature type="domain" description="DH" evidence="1">
    <location>
        <begin position="48"/>
        <end position="207"/>
    </location>
</feature>
<gene>
    <name type="primary">mug10</name>
    <name type="ORF">SPAC57A10.04</name>
</gene>
<dbReference type="EMBL" id="CU329670">
    <property type="protein sequence ID" value="CAB08167.3"/>
    <property type="molecule type" value="Genomic_DNA"/>
</dbReference>
<dbReference type="PIR" id="T38931">
    <property type="entry name" value="T38931"/>
</dbReference>
<dbReference type="RefSeq" id="NP_593309.2">
    <property type="nucleotide sequence ID" value="NM_001018739.2"/>
</dbReference>
<dbReference type="SMR" id="P87052"/>
<dbReference type="BioGRID" id="278133">
    <property type="interactions" value="7"/>
</dbReference>
<dbReference type="STRING" id="284812.P87052"/>
<dbReference type="PaxDb" id="4896-SPAC57A10.04.1"/>
<dbReference type="EnsemblFungi" id="SPAC57A10.04.1">
    <property type="protein sequence ID" value="SPAC57A10.04.1:pep"/>
    <property type="gene ID" value="SPAC57A10.04"/>
</dbReference>
<dbReference type="GeneID" id="2541637"/>
<dbReference type="KEGG" id="spo:2541637"/>
<dbReference type="PomBase" id="SPAC57A10.04">
    <property type="gene designation" value="mug10"/>
</dbReference>
<dbReference type="VEuPathDB" id="FungiDB:SPAC57A10.04"/>
<dbReference type="HOGENOM" id="CLU_829381_0_0_1"/>
<dbReference type="InParanoid" id="P87052"/>
<dbReference type="OMA" id="GICTCVK"/>
<dbReference type="PRO" id="PR:P87052"/>
<dbReference type="Proteomes" id="UP000002485">
    <property type="component" value="Chromosome I"/>
</dbReference>
<dbReference type="GO" id="GO:0032153">
    <property type="term" value="C:cell division site"/>
    <property type="evidence" value="ECO:0007669"/>
    <property type="project" value="UniProtKB-ARBA"/>
</dbReference>
<dbReference type="GO" id="GO:0005737">
    <property type="term" value="C:cytoplasm"/>
    <property type="evidence" value="ECO:0007005"/>
    <property type="project" value="PomBase"/>
</dbReference>
<dbReference type="GO" id="GO:0005634">
    <property type="term" value="C:nucleus"/>
    <property type="evidence" value="ECO:0007005"/>
    <property type="project" value="PomBase"/>
</dbReference>
<dbReference type="GO" id="GO:0005085">
    <property type="term" value="F:guanyl-nucleotide exchange factor activity"/>
    <property type="evidence" value="ECO:0007669"/>
    <property type="project" value="InterPro"/>
</dbReference>
<dbReference type="GO" id="GO:0051321">
    <property type="term" value="P:meiotic cell cycle"/>
    <property type="evidence" value="ECO:0007669"/>
    <property type="project" value="UniProtKB-KW"/>
</dbReference>
<dbReference type="Gene3D" id="1.20.900.10">
    <property type="entry name" value="Dbl homology (DH) domain"/>
    <property type="match status" value="1"/>
</dbReference>
<dbReference type="InterPro" id="IPR035899">
    <property type="entry name" value="DBL_dom_sf"/>
</dbReference>
<dbReference type="InterPro" id="IPR000219">
    <property type="entry name" value="DH_dom"/>
</dbReference>
<dbReference type="SUPFAM" id="SSF48065">
    <property type="entry name" value="DBL homology domain (DH-domain)"/>
    <property type="match status" value="1"/>
</dbReference>
<dbReference type="PROSITE" id="PS50010">
    <property type="entry name" value="DH_2"/>
    <property type="match status" value="1"/>
</dbReference>
<protein>
    <recommendedName>
        <fullName>Meiotically up-regulated gene 10 protein</fullName>
    </recommendedName>
</protein>
<name>MUG10_SCHPO</name>
<keyword id="KW-0963">Cytoplasm</keyword>
<keyword id="KW-0469">Meiosis</keyword>
<keyword id="KW-0539">Nucleus</keyword>
<keyword id="KW-1185">Reference proteome</keyword>
<proteinExistence type="evidence at protein level"/>
<comment type="function">
    <text evidence="2">Has a role in meiosis.</text>
</comment>
<comment type="subcellular location">
    <subcellularLocation>
        <location evidence="3">Cytoplasm</location>
    </subcellularLocation>
    <subcellularLocation>
        <location evidence="3">Nucleus</location>
    </subcellularLocation>
</comment>
<sequence length="344" mass="39121">MALLKTMPIIRSLTRGKSIRLLQKQSTKRTNPCVYLEAKAVEQTPATEFNSILQEIISTEYNYSVDLKKTLNEIIMPIEGQSMEREAIGICTCFKTLNQLHTKLYQQMISSGSPVYSLSQSLPAFRDVYHMYTINLSGISAIEKIISDPSSCNSQLLIPLQHLLRYPIHLARVCKMLRKYPFLNGDFRMAVKTLDDFRELCSYIDQEKAREESYQVLSALCGNQGVAVDIPRHIKFKGSVIPATSFIYDFNACVFCDDGLVVWTRYVKKIEMKAVSIEQCLRVDELSNSILVCTLNMKGKLLNRHLAPQTMAASVFLKWYHERAGISNGKENKLNRLKVVNAKT</sequence>
<evidence type="ECO:0000255" key="1">
    <source>
        <dbReference type="PROSITE-ProRule" id="PRU00062"/>
    </source>
</evidence>
<evidence type="ECO:0000269" key="2">
    <source>
    </source>
</evidence>
<evidence type="ECO:0000269" key="3">
    <source>
    </source>
</evidence>
<accession>P87052</accession>
<organism>
    <name type="scientific">Schizosaccharomyces pombe (strain 972 / ATCC 24843)</name>
    <name type="common">Fission yeast</name>
    <dbReference type="NCBI Taxonomy" id="284812"/>
    <lineage>
        <taxon>Eukaryota</taxon>
        <taxon>Fungi</taxon>
        <taxon>Dikarya</taxon>
        <taxon>Ascomycota</taxon>
        <taxon>Taphrinomycotina</taxon>
        <taxon>Schizosaccharomycetes</taxon>
        <taxon>Schizosaccharomycetales</taxon>
        <taxon>Schizosaccharomycetaceae</taxon>
        <taxon>Schizosaccharomyces</taxon>
    </lineage>
</organism>